<keyword id="KW-0378">Hydrolase</keyword>
<keyword id="KW-0460">Magnesium</keyword>
<keyword id="KW-1185">Reference proteome</keyword>
<name>COMB_CARHZ</name>
<feature type="chain" id="PRO_1000072426" description="Probable 2-phosphosulfolactate phosphatase">
    <location>
        <begin position="1"/>
        <end position="238"/>
    </location>
</feature>
<reference key="1">
    <citation type="journal article" date="2005" name="PLoS Genet.">
        <title>Life in hot carbon monoxide: the complete genome sequence of Carboxydothermus hydrogenoformans Z-2901.</title>
        <authorList>
            <person name="Wu M."/>
            <person name="Ren Q."/>
            <person name="Durkin A.S."/>
            <person name="Daugherty S.C."/>
            <person name="Brinkac L.M."/>
            <person name="Dodson R.J."/>
            <person name="Madupu R."/>
            <person name="Sullivan S.A."/>
            <person name="Kolonay J.F."/>
            <person name="Nelson W.C."/>
            <person name="Tallon L.J."/>
            <person name="Jones K.M."/>
            <person name="Ulrich L.E."/>
            <person name="Gonzalez J.M."/>
            <person name="Zhulin I.B."/>
            <person name="Robb F.T."/>
            <person name="Eisen J.A."/>
        </authorList>
    </citation>
    <scope>NUCLEOTIDE SEQUENCE [LARGE SCALE GENOMIC DNA]</scope>
    <source>
        <strain>ATCC BAA-161 / DSM 6008 / Z-2901</strain>
    </source>
</reference>
<gene>
    <name evidence="1" type="primary">comB</name>
    <name type="ordered locus">CHY_1042</name>
</gene>
<dbReference type="EC" id="3.1.3.71" evidence="1"/>
<dbReference type="EMBL" id="CP000141">
    <property type="protein sequence ID" value="ABB15297.1"/>
    <property type="molecule type" value="Genomic_DNA"/>
</dbReference>
<dbReference type="RefSeq" id="WP_011343964.1">
    <property type="nucleotide sequence ID" value="NC_007503.1"/>
</dbReference>
<dbReference type="SMR" id="Q3AD96"/>
<dbReference type="FunCoup" id="Q3AD96">
    <property type="interactions" value="92"/>
</dbReference>
<dbReference type="STRING" id="246194.CHY_1042"/>
<dbReference type="KEGG" id="chy:CHY_1042"/>
<dbReference type="eggNOG" id="COG2045">
    <property type="taxonomic scope" value="Bacteria"/>
</dbReference>
<dbReference type="HOGENOM" id="CLU_070028_0_0_9"/>
<dbReference type="InParanoid" id="Q3AD96"/>
<dbReference type="OrthoDB" id="4913at2"/>
<dbReference type="Proteomes" id="UP000002706">
    <property type="component" value="Chromosome"/>
</dbReference>
<dbReference type="GO" id="GO:0050532">
    <property type="term" value="F:2-phosphosulfolactate phosphatase activity"/>
    <property type="evidence" value="ECO:0007669"/>
    <property type="project" value="UniProtKB-UniRule"/>
</dbReference>
<dbReference type="GO" id="GO:0000287">
    <property type="term" value="F:magnesium ion binding"/>
    <property type="evidence" value="ECO:0007669"/>
    <property type="project" value="UniProtKB-UniRule"/>
</dbReference>
<dbReference type="GO" id="GO:0050545">
    <property type="term" value="F:sulfopyruvate decarboxylase activity"/>
    <property type="evidence" value="ECO:0007669"/>
    <property type="project" value="TreeGrafter"/>
</dbReference>
<dbReference type="FunFam" id="3.90.1560.10:FF:000001">
    <property type="entry name" value="Probable 2-phosphosulfolactate phosphatase"/>
    <property type="match status" value="1"/>
</dbReference>
<dbReference type="Gene3D" id="3.90.1560.10">
    <property type="entry name" value="ComB-like"/>
    <property type="match status" value="1"/>
</dbReference>
<dbReference type="HAMAP" id="MF_00490">
    <property type="entry name" value="ComB"/>
    <property type="match status" value="1"/>
</dbReference>
<dbReference type="InterPro" id="IPR005238">
    <property type="entry name" value="ComB-like"/>
</dbReference>
<dbReference type="InterPro" id="IPR036702">
    <property type="entry name" value="ComB-like_sf"/>
</dbReference>
<dbReference type="PANTHER" id="PTHR37311">
    <property type="entry name" value="2-PHOSPHOSULFOLACTATE PHOSPHATASE-RELATED"/>
    <property type="match status" value="1"/>
</dbReference>
<dbReference type="PANTHER" id="PTHR37311:SF1">
    <property type="entry name" value="2-PHOSPHOSULFOLACTATE PHOSPHATASE-RELATED"/>
    <property type="match status" value="1"/>
</dbReference>
<dbReference type="Pfam" id="PF04029">
    <property type="entry name" value="2-ph_phosp"/>
    <property type="match status" value="1"/>
</dbReference>
<dbReference type="SUPFAM" id="SSF142823">
    <property type="entry name" value="ComB-like"/>
    <property type="match status" value="1"/>
</dbReference>
<sequence>MKIDVLFYPEKLKNAEDKAVVVLDVLRATTTIATALAAGAEKIYPVSSIKEAFLLKKKISGALLGGERGGIKVPGFDLGNSPLEYQGLKGKTIILSSTNGTKTLKKAVSARTLIAGSIVNAKAVADYLLKLNLDVVLMPSGTDSQFSLEDFAGAGYIISLLAEQKKIELSDQAYVSFELARSNPPEEILTRSFHGQRLINLGFARDVEYCAKLNLLDVVPEGHLQEGRLVIESSRLFR</sequence>
<proteinExistence type="inferred from homology"/>
<protein>
    <recommendedName>
        <fullName evidence="1">Probable 2-phosphosulfolactate phosphatase</fullName>
        <ecNumber evidence="1">3.1.3.71</ecNumber>
    </recommendedName>
</protein>
<comment type="catalytic activity">
    <reaction evidence="1">
        <text>(2R)-O-phospho-3-sulfolactate + H2O = (2R)-3-sulfolactate + phosphate</text>
        <dbReference type="Rhea" id="RHEA:23416"/>
        <dbReference type="ChEBI" id="CHEBI:15377"/>
        <dbReference type="ChEBI" id="CHEBI:15597"/>
        <dbReference type="ChEBI" id="CHEBI:43474"/>
        <dbReference type="ChEBI" id="CHEBI:58738"/>
        <dbReference type="EC" id="3.1.3.71"/>
    </reaction>
</comment>
<comment type="cofactor">
    <cofactor evidence="1">
        <name>Mg(2+)</name>
        <dbReference type="ChEBI" id="CHEBI:18420"/>
    </cofactor>
</comment>
<comment type="similarity">
    <text evidence="1">Belongs to the ComB family.</text>
</comment>
<evidence type="ECO:0000255" key="1">
    <source>
        <dbReference type="HAMAP-Rule" id="MF_00490"/>
    </source>
</evidence>
<organism>
    <name type="scientific">Carboxydothermus hydrogenoformans (strain ATCC BAA-161 / DSM 6008 / Z-2901)</name>
    <dbReference type="NCBI Taxonomy" id="246194"/>
    <lineage>
        <taxon>Bacteria</taxon>
        <taxon>Bacillati</taxon>
        <taxon>Bacillota</taxon>
        <taxon>Clostridia</taxon>
        <taxon>Thermoanaerobacterales</taxon>
        <taxon>Thermoanaerobacteraceae</taxon>
        <taxon>Carboxydothermus</taxon>
    </lineage>
</organism>
<accession>Q3AD96</accession>